<sequence length="325" mass="37290">MNLSAAHHQISLSDGNNIPLIGLGTYSDPRPVPGKTYVAVKTAIDEGYRHIDGAYVYHNEHEVGEAIREKIAEGKVKREEIFYCGKLWNTEHVPSMVLPALERTLKALKLDYIDLYIIELPMAFKPGKEIYPRDENGRIIYDKTNLCATWEALEACKDAGLVKSLGVSNFNRRQLELILNKPGLKYKPVTNQVECHPYFTQTKLLKFCQQHDIVIVAHSPLGTCRNPSWVNVSSPPLLNDELLTSLGKKYNKTQAQIVLRFNIQRGIVVIPKSFTPERIKENFQIFDFSLTEEEMKDIDALNKNVRYVELLMWSDHPEYPFHDEY</sequence>
<gene>
    <name type="primary">Akr1d1</name>
</gene>
<comment type="function">
    <text evidence="1">Catalyzes the stereospecific NADPH-dependent reduction of the C4-C5 double bond of bile acid intermediates and steroid hormones carrying a delta(4)-3-one structure to yield an A/B cis-ring junction. This cis-configuration is crucial for bile acid biosynthesis and plays important roles in steroid metabolism. Capable of reducing a broad range of delta-(4)-3-ketosteroids from C18 (such as, 17beta-hydroxyestr-4-en-3-one) to C27 (such as, 7alpha-hydroxycholest-4-en-3-one).</text>
</comment>
<comment type="catalytic activity">
    <reaction evidence="1">
        <text>5beta-cholestan-3-one + NADP(+) = cholest-4-en-3-one + NADPH + H(+)</text>
        <dbReference type="Rhea" id="RHEA:11524"/>
        <dbReference type="ChEBI" id="CHEBI:15378"/>
        <dbReference type="ChEBI" id="CHEBI:16074"/>
        <dbReference type="ChEBI" id="CHEBI:16175"/>
        <dbReference type="ChEBI" id="CHEBI:57783"/>
        <dbReference type="ChEBI" id="CHEBI:58349"/>
        <dbReference type="EC" id="1.3.1.3"/>
    </reaction>
    <physiologicalReaction direction="right-to-left" evidence="1">
        <dbReference type="Rhea" id="RHEA:11526"/>
    </physiologicalReaction>
</comment>
<comment type="catalytic activity">
    <reaction evidence="1">
        <text>4,5beta-dihydrocortisone + NADP(+) = cortisone + NADPH + H(+)</text>
        <dbReference type="Rhea" id="RHEA:14037"/>
        <dbReference type="ChEBI" id="CHEBI:15378"/>
        <dbReference type="ChEBI" id="CHEBI:16962"/>
        <dbReference type="ChEBI" id="CHEBI:18093"/>
        <dbReference type="ChEBI" id="CHEBI:57783"/>
        <dbReference type="ChEBI" id="CHEBI:58349"/>
        <dbReference type="EC" id="1.3.1.3"/>
    </reaction>
    <physiologicalReaction direction="right-to-left" evidence="1">
        <dbReference type="Rhea" id="RHEA:14039"/>
    </physiologicalReaction>
</comment>
<comment type="catalytic activity">
    <reaction evidence="1">
        <text>cortisol + NADPH + H(+) = 5beta-dihydrocortisol + NADP(+)</text>
        <dbReference type="Rhea" id="RHEA:46644"/>
        <dbReference type="ChEBI" id="CHEBI:732"/>
        <dbReference type="ChEBI" id="CHEBI:15378"/>
        <dbReference type="ChEBI" id="CHEBI:17650"/>
        <dbReference type="ChEBI" id="CHEBI:57783"/>
        <dbReference type="ChEBI" id="CHEBI:58349"/>
    </reaction>
    <physiologicalReaction direction="left-to-right" evidence="1">
        <dbReference type="Rhea" id="RHEA:46645"/>
    </physiologicalReaction>
</comment>
<comment type="catalytic activity">
    <reaction evidence="1">
        <text>corticosterone + NADPH + H(+) = 5beta-dihydrocorticosterone + NADP(+)</text>
        <dbReference type="Rhea" id="RHEA:46664"/>
        <dbReference type="ChEBI" id="CHEBI:15378"/>
        <dbReference type="ChEBI" id="CHEBI:16827"/>
        <dbReference type="ChEBI" id="CHEBI:57783"/>
        <dbReference type="ChEBI" id="CHEBI:58349"/>
        <dbReference type="ChEBI" id="CHEBI:86381"/>
    </reaction>
    <physiologicalReaction direction="left-to-right" evidence="1">
        <dbReference type="Rhea" id="RHEA:46665"/>
    </physiologicalReaction>
</comment>
<comment type="catalytic activity">
    <reaction evidence="1">
        <text>7alpha,12alpha-dihydroxycholest-4-en-3-one + NADPH + H(+) = 7alpha,12alpha-dihydroxy-5beta-cholestan-3-one + NADP(+)</text>
        <dbReference type="Rhea" id="RHEA:46632"/>
        <dbReference type="ChEBI" id="CHEBI:2288"/>
        <dbReference type="ChEBI" id="CHEBI:15378"/>
        <dbReference type="ChEBI" id="CHEBI:28477"/>
        <dbReference type="ChEBI" id="CHEBI:57783"/>
        <dbReference type="ChEBI" id="CHEBI:58349"/>
    </reaction>
    <physiologicalReaction direction="left-to-right" evidence="1">
        <dbReference type="Rhea" id="RHEA:46633"/>
    </physiologicalReaction>
</comment>
<comment type="catalytic activity">
    <reaction evidence="1">
        <text>7alpha-hydroxycholest-4-en-3-one + NADPH + H(+) = 7alpha-hydroxy-5beta-cholestan-3-one + NADP(+)</text>
        <dbReference type="Rhea" id="RHEA:46640"/>
        <dbReference type="ChEBI" id="CHEBI:2290"/>
        <dbReference type="ChEBI" id="CHEBI:15378"/>
        <dbReference type="ChEBI" id="CHEBI:17899"/>
        <dbReference type="ChEBI" id="CHEBI:57783"/>
        <dbReference type="ChEBI" id="CHEBI:58349"/>
    </reaction>
    <physiologicalReaction direction="left-to-right" evidence="1">
        <dbReference type="Rhea" id="RHEA:46641"/>
    </physiologicalReaction>
</comment>
<comment type="catalytic activity">
    <reaction evidence="1">
        <text>epitestosterone + NADPH + H(+) = 5beta-dihydroepitestosterone + NADP(+)</text>
        <dbReference type="Rhea" id="RHEA:46652"/>
        <dbReference type="ChEBI" id="CHEBI:15378"/>
        <dbReference type="ChEBI" id="CHEBI:42534"/>
        <dbReference type="ChEBI" id="CHEBI:57783"/>
        <dbReference type="ChEBI" id="CHEBI:58349"/>
        <dbReference type="ChEBI" id="CHEBI:86377"/>
    </reaction>
    <physiologicalReaction direction="left-to-right" evidence="1">
        <dbReference type="Rhea" id="RHEA:46653"/>
    </physiologicalReaction>
</comment>
<comment type="catalytic activity">
    <reaction evidence="1">
        <text>androst-4-ene-3,17-dione + NADPH + H(+) = 5beta-androstane-3,17-dione + NADP(+)</text>
        <dbReference type="Rhea" id="RHEA:46656"/>
        <dbReference type="ChEBI" id="CHEBI:15378"/>
        <dbReference type="ChEBI" id="CHEBI:16422"/>
        <dbReference type="ChEBI" id="CHEBI:16985"/>
        <dbReference type="ChEBI" id="CHEBI:57783"/>
        <dbReference type="ChEBI" id="CHEBI:58349"/>
    </reaction>
    <physiologicalReaction direction="left-to-right" evidence="1">
        <dbReference type="Rhea" id="RHEA:46657"/>
    </physiologicalReaction>
</comment>
<comment type="catalytic activity">
    <reaction evidence="1">
        <text>progesterone + NADPH + H(+) = 5beta-pregnan-3,20-dione + NADP(+)</text>
        <dbReference type="Rhea" id="RHEA:46660"/>
        <dbReference type="ChEBI" id="CHEBI:15378"/>
        <dbReference type="ChEBI" id="CHEBI:17026"/>
        <dbReference type="ChEBI" id="CHEBI:30154"/>
        <dbReference type="ChEBI" id="CHEBI:57783"/>
        <dbReference type="ChEBI" id="CHEBI:58349"/>
    </reaction>
    <physiologicalReaction direction="left-to-right" evidence="1">
        <dbReference type="Rhea" id="RHEA:46661"/>
    </physiologicalReaction>
</comment>
<comment type="catalytic activity">
    <reaction evidence="1">
        <text>21-hydroxyprogesterone + NADPH + H(+) = 5beta-dihydrodeoxycorticosterone + NADP(+)</text>
        <dbReference type="Rhea" id="RHEA:46668"/>
        <dbReference type="ChEBI" id="CHEBI:15378"/>
        <dbReference type="ChEBI" id="CHEBI:16973"/>
        <dbReference type="ChEBI" id="CHEBI:57783"/>
        <dbReference type="ChEBI" id="CHEBI:58349"/>
        <dbReference type="ChEBI" id="CHEBI:86384"/>
    </reaction>
    <physiologicalReaction direction="left-to-right" evidence="1">
        <dbReference type="Rhea" id="RHEA:46669"/>
    </physiologicalReaction>
</comment>
<comment type="catalytic activity">
    <reaction evidence="1">
        <text>aldosterone + NADPH + H(+) = 5beta-dihydroaldosterone + NADP(+)</text>
        <dbReference type="Rhea" id="RHEA:46672"/>
        <dbReference type="ChEBI" id="CHEBI:15378"/>
        <dbReference type="ChEBI" id="CHEBI:27584"/>
        <dbReference type="ChEBI" id="CHEBI:57783"/>
        <dbReference type="ChEBI" id="CHEBI:58349"/>
        <dbReference type="ChEBI" id="CHEBI:86389"/>
    </reaction>
    <physiologicalReaction direction="left-to-right" evidence="1">
        <dbReference type="Rhea" id="RHEA:46673"/>
    </physiologicalReaction>
</comment>
<comment type="catalytic activity">
    <reaction evidence="1">
        <text>17beta-hydroxyandrosta-1,4-dien-3-one + NADPH + H(+) = 17beta-hydroxy-5beta-androst-1-en-3-one + NADP(+)</text>
        <dbReference type="Rhea" id="RHEA:47076"/>
        <dbReference type="ChEBI" id="CHEBI:15378"/>
        <dbReference type="ChEBI" id="CHEBI:34584"/>
        <dbReference type="ChEBI" id="CHEBI:57783"/>
        <dbReference type="ChEBI" id="CHEBI:58349"/>
        <dbReference type="ChEBI" id="CHEBI:87331"/>
    </reaction>
    <physiologicalReaction direction="left-to-right" evidence="1">
        <dbReference type="Rhea" id="RHEA:47077"/>
    </physiologicalReaction>
</comment>
<comment type="catalytic activity">
    <reaction evidence="1">
        <text>17beta-hydroxyestr-4-en-3-one + NADPH + H(+) = 17beta-hydroxy-5beta-estran-3-one + NADP(+)</text>
        <dbReference type="Rhea" id="RHEA:47080"/>
        <dbReference type="ChEBI" id="CHEBI:7466"/>
        <dbReference type="ChEBI" id="CHEBI:15378"/>
        <dbReference type="ChEBI" id="CHEBI:57783"/>
        <dbReference type="ChEBI" id="CHEBI:58349"/>
        <dbReference type="ChEBI" id="CHEBI:87333"/>
    </reaction>
    <physiologicalReaction direction="left-to-right" evidence="1">
        <dbReference type="Rhea" id="RHEA:47081"/>
    </physiologicalReaction>
</comment>
<comment type="catalytic activity">
    <reaction evidence="1">
        <text>5beta-dihydrotestosterone + NADP(+) = testosterone + NADPH + H(+)</text>
        <dbReference type="Rhea" id="RHEA:46636"/>
        <dbReference type="ChEBI" id="CHEBI:2150"/>
        <dbReference type="ChEBI" id="CHEBI:15378"/>
        <dbReference type="ChEBI" id="CHEBI:17347"/>
        <dbReference type="ChEBI" id="CHEBI:57783"/>
        <dbReference type="ChEBI" id="CHEBI:58349"/>
        <dbReference type="EC" id="1.3.1.3"/>
    </reaction>
    <physiologicalReaction direction="left-to-right" evidence="1">
        <dbReference type="Rhea" id="RHEA:46637"/>
    </physiologicalReaction>
</comment>
<comment type="catalytic activity">
    <reaction evidence="1">
        <text>androst-4-ene-3,11,17-trione + NADPH + H(+) = 17beta-hydroxyandrost-4-ene-3,11-dione + NADP(+)</text>
        <dbReference type="Rhea" id="RHEA:53484"/>
        <dbReference type="ChEBI" id="CHEBI:2495"/>
        <dbReference type="ChEBI" id="CHEBI:15378"/>
        <dbReference type="ChEBI" id="CHEBI:34133"/>
        <dbReference type="ChEBI" id="CHEBI:57783"/>
        <dbReference type="ChEBI" id="CHEBI:58349"/>
    </reaction>
    <physiologicalReaction direction="left-to-right" evidence="1">
        <dbReference type="Rhea" id="RHEA:53485"/>
    </physiologicalReaction>
</comment>
<comment type="activity regulation">
    <text evidence="1">Subject to inhibition by high substrate concentrations. Inhibited by testosterone concentrations above 10 uM. Inhibited by the primary and secondary bile acids chenodeoxycholic acid and ursodeoxycholic acid.</text>
</comment>
<comment type="subcellular location">
    <subcellularLocation>
        <location evidence="1">Cytoplasm</location>
    </subcellularLocation>
</comment>
<comment type="similarity">
    <text evidence="2">Belongs to the aldo/keto reductase family.</text>
</comment>
<evidence type="ECO:0000250" key="1">
    <source>
        <dbReference type="UniProtKB" id="P51857"/>
    </source>
</evidence>
<evidence type="ECO:0000305" key="2"/>
<evidence type="ECO:0007744" key="3">
    <source>
    </source>
</evidence>
<accession>Q8VCX1</accession>
<reference key="1">
    <citation type="journal article" date="2004" name="Genome Res.">
        <title>The status, quality, and expansion of the NIH full-length cDNA project: the Mammalian Gene Collection (MGC).</title>
        <authorList>
            <consortium name="The MGC Project Team"/>
        </authorList>
    </citation>
    <scope>NUCLEOTIDE SEQUENCE [LARGE SCALE MRNA]</scope>
    <source>
        <strain>FVB/N</strain>
        <tissue>Liver</tissue>
    </source>
</reference>
<reference key="2">
    <citation type="journal article" date="2010" name="Cell">
        <title>A tissue-specific atlas of mouse protein phosphorylation and expression.</title>
        <authorList>
            <person name="Huttlin E.L."/>
            <person name="Jedrychowski M.P."/>
            <person name="Elias J.E."/>
            <person name="Goswami T."/>
            <person name="Rad R."/>
            <person name="Beausoleil S.A."/>
            <person name="Villen J."/>
            <person name="Haas W."/>
            <person name="Sowa M.E."/>
            <person name="Gygi S.P."/>
        </authorList>
    </citation>
    <scope>PHOSPHORYLATION [LARGE SCALE ANALYSIS] AT SER-228</scope>
    <scope>IDENTIFICATION BY MASS SPECTROMETRY [LARGE SCALE ANALYSIS]</scope>
    <source>
        <tissue>Liver</tissue>
    </source>
</reference>
<organism>
    <name type="scientific">Mus musculus</name>
    <name type="common">Mouse</name>
    <dbReference type="NCBI Taxonomy" id="10090"/>
    <lineage>
        <taxon>Eukaryota</taxon>
        <taxon>Metazoa</taxon>
        <taxon>Chordata</taxon>
        <taxon>Craniata</taxon>
        <taxon>Vertebrata</taxon>
        <taxon>Euteleostomi</taxon>
        <taxon>Mammalia</taxon>
        <taxon>Eutheria</taxon>
        <taxon>Euarchontoglires</taxon>
        <taxon>Glires</taxon>
        <taxon>Rodentia</taxon>
        <taxon>Myomorpha</taxon>
        <taxon>Muroidea</taxon>
        <taxon>Muridae</taxon>
        <taxon>Murinae</taxon>
        <taxon>Mus</taxon>
        <taxon>Mus</taxon>
    </lineage>
</organism>
<protein>
    <recommendedName>
        <fullName>Aldo-keto reductase family 1 member D1</fullName>
        <ecNumber evidence="1">1.3.1.3</ecNumber>
    </recommendedName>
    <alternativeName>
        <fullName>3-oxo-5-beta-steroid 4-dehydrogenase</fullName>
    </alternativeName>
    <alternativeName>
        <fullName>Delta(4)-3-ketosteroid 5-beta-reductase</fullName>
    </alternativeName>
    <alternativeName>
        <fullName>Delta(4)-3-oxosteroid 5-beta-reductase</fullName>
    </alternativeName>
</protein>
<proteinExistence type="evidence at protein level"/>
<dbReference type="EC" id="1.3.1.3" evidence="1"/>
<dbReference type="EMBL" id="BC018333">
    <property type="protein sequence ID" value="AAH18333.1"/>
    <property type="molecule type" value="mRNA"/>
</dbReference>
<dbReference type="CCDS" id="CCDS20007.1"/>
<dbReference type="RefSeq" id="NP_663339.1">
    <property type="nucleotide sequence ID" value="NM_145364.2"/>
</dbReference>
<dbReference type="RefSeq" id="XP_006505888.1">
    <property type="nucleotide sequence ID" value="XM_006505825.1"/>
</dbReference>
<dbReference type="SMR" id="Q8VCX1"/>
<dbReference type="FunCoup" id="Q8VCX1">
    <property type="interactions" value="443"/>
</dbReference>
<dbReference type="STRING" id="10090.ENSMUSP00000048830"/>
<dbReference type="iPTMnet" id="Q8VCX1"/>
<dbReference type="PhosphoSitePlus" id="Q8VCX1"/>
<dbReference type="SwissPalm" id="Q8VCX1"/>
<dbReference type="jPOST" id="Q8VCX1"/>
<dbReference type="PaxDb" id="10090-ENSMUSP00000048830"/>
<dbReference type="PeptideAtlas" id="Q8VCX1"/>
<dbReference type="ProteomicsDB" id="285790"/>
<dbReference type="Antibodypedia" id="32317">
    <property type="antibodies" value="242 antibodies from 26 providers"/>
</dbReference>
<dbReference type="DNASU" id="208665"/>
<dbReference type="Ensembl" id="ENSMUST00000040987.11">
    <property type="protein sequence ID" value="ENSMUSP00000048830.8"/>
    <property type="gene ID" value="ENSMUSG00000038641.13"/>
</dbReference>
<dbReference type="GeneID" id="208665"/>
<dbReference type="KEGG" id="mmu:208665"/>
<dbReference type="UCSC" id="uc009bjg.2">
    <property type="organism name" value="mouse"/>
</dbReference>
<dbReference type="AGR" id="MGI:2384785"/>
<dbReference type="CTD" id="6718"/>
<dbReference type="MGI" id="MGI:2384785">
    <property type="gene designation" value="Akr1d1"/>
</dbReference>
<dbReference type="VEuPathDB" id="HostDB:ENSMUSG00000038641"/>
<dbReference type="eggNOG" id="KOG1577">
    <property type="taxonomic scope" value="Eukaryota"/>
</dbReference>
<dbReference type="GeneTree" id="ENSGT00940000155961"/>
<dbReference type="HOGENOM" id="CLU_023205_0_0_1"/>
<dbReference type="InParanoid" id="Q8VCX1"/>
<dbReference type="OMA" id="YCLQKNW"/>
<dbReference type="OrthoDB" id="416253at2759"/>
<dbReference type="PhylomeDB" id="Q8VCX1"/>
<dbReference type="TreeFam" id="TF106492"/>
<dbReference type="Reactome" id="R-MMU-193368">
    <property type="pathway name" value="Synthesis of bile acids and bile salts via 7alpha-hydroxycholesterol"/>
</dbReference>
<dbReference type="Reactome" id="R-MMU-193775">
    <property type="pathway name" value="Synthesis of bile acids and bile salts via 24-hydroxycholesterol"/>
</dbReference>
<dbReference type="Reactome" id="R-MMU-193807">
    <property type="pathway name" value="Synthesis of bile acids and bile salts via 27-hydroxycholesterol"/>
</dbReference>
<dbReference type="BioGRID-ORCS" id="208665">
    <property type="hits" value="3 hits in 80 CRISPR screens"/>
</dbReference>
<dbReference type="ChiTaRS" id="Akr1d1">
    <property type="organism name" value="mouse"/>
</dbReference>
<dbReference type="PRO" id="PR:Q8VCX1"/>
<dbReference type="Proteomes" id="UP000000589">
    <property type="component" value="Chromosome 6"/>
</dbReference>
<dbReference type="RNAct" id="Q8VCX1">
    <property type="molecule type" value="protein"/>
</dbReference>
<dbReference type="Bgee" id="ENSMUSG00000038641">
    <property type="expression patterns" value="Expressed in left lobe of liver and 50 other cell types or tissues"/>
</dbReference>
<dbReference type="GO" id="GO:0005829">
    <property type="term" value="C:cytosol"/>
    <property type="evidence" value="ECO:0007669"/>
    <property type="project" value="Ensembl"/>
</dbReference>
<dbReference type="GO" id="GO:0047568">
    <property type="term" value="F:3-oxo-5-beta-steroid 4-dehydrogenase activity"/>
    <property type="evidence" value="ECO:0000266"/>
    <property type="project" value="MGI"/>
</dbReference>
<dbReference type="GO" id="GO:0047787">
    <property type="term" value="F:Delta4-3-oxosteroid 5beta-reductase activity"/>
    <property type="evidence" value="ECO:0007669"/>
    <property type="project" value="UniProtKB-EC"/>
</dbReference>
<dbReference type="GO" id="GO:0008209">
    <property type="term" value="P:androgen metabolic process"/>
    <property type="evidence" value="ECO:0007669"/>
    <property type="project" value="Ensembl"/>
</dbReference>
<dbReference type="GO" id="GO:0006699">
    <property type="term" value="P:bile acid biosynthetic process"/>
    <property type="evidence" value="ECO:0000266"/>
    <property type="project" value="MGI"/>
</dbReference>
<dbReference type="GO" id="GO:0030573">
    <property type="term" value="P:bile acid catabolic process"/>
    <property type="evidence" value="ECO:0007669"/>
    <property type="project" value="UniProtKB-KW"/>
</dbReference>
<dbReference type="GO" id="GO:0008207">
    <property type="term" value="P:C21-steroid hormone metabolic process"/>
    <property type="evidence" value="ECO:0007669"/>
    <property type="project" value="Ensembl"/>
</dbReference>
<dbReference type="GO" id="GO:0006707">
    <property type="term" value="P:cholesterol catabolic process"/>
    <property type="evidence" value="ECO:0007669"/>
    <property type="project" value="Ensembl"/>
</dbReference>
<dbReference type="GO" id="GO:0007586">
    <property type="term" value="P:digestion"/>
    <property type="evidence" value="ECO:0007669"/>
    <property type="project" value="Ensembl"/>
</dbReference>
<dbReference type="CDD" id="cd19109">
    <property type="entry name" value="AKR_AKR1D1-3"/>
    <property type="match status" value="1"/>
</dbReference>
<dbReference type="FunFam" id="3.20.20.100:FF:000003">
    <property type="entry name" value="Aldo-keto reductase family 1 member C3"/>
    <property type="match status" value="1"/>
</dbReference>
<dbReference type="Gene3D" id="3.20.20.100">
    <property type="entry name" value="NADP-dependent oxidoreductase domain"/>
    <property type="match status" value="1"/>
</dbReference>
<dbReference type="InterPro" id="IPR020471">
    <property type="entry name" value="AKR"/>
</dbReference>
<dbReference type="InterPro" id="IPR044483">
    <property type="entry name" value="AKR1D1"/>
</dbReference>
<dbReference type="InterPro" id="IPR018170">
    <property type="entry name" value="Aldo/ket_reductase_CS"/>
</dbReference>
<dbReference type="InterPro" id="IPR023210">
    <property type="entry name" value="NADP_OxRdtase_dom"/>
</dbReference>
<dbReference type="InterPro" id="IPR036812">
    <property type="entry name" value="NADP_OxRdtase_dom_sf"/>
</dbReference>
<dbReference type="PANTHER" id="PTHR11732">
    <property type="entry name" value="ALDO/KETO REDUCTASE"/>
    <property type="match status" value="1"/>
</dbReference>
<dbReference type="Pfam" id="PF00248">
    <property type="entry name" value="Aldo_ket_red"/>
    <property type="match status" value="1"/>
</dbReference>
<dbReference type="PIRSF" id="PIRSF000097">
    <property type="entry name" value="AKR"/>
    <property type="match status" value="1"/>
</dbReference>
<dbReference type="PRINTS" id="PR00069">
    <property type="entry name" value="ALDKETRDTASE"/>
</dbReference>
<dbReference type="SUPFAM" id="SSF51430">
    <property type="entry name" value="NAD(P)-linked oxidoreductase"/>
    <property type="match status" value="1"/>
</dbReference>
<dbReference type="PROSITE" id="PS00798">
    <property type="entry name" value="ALDOKETO_REDUCTASE_1"/>
    <property type="match status" value="1"/>
</dbReference>
<dbReference type="PROSITE" id="PS00062">
    <property type="entry name" value="ALDOKETO_REDUCTASE_2"/>
    <property type="match status" value="1"/>
</dbReference>
<dbReference type="PROSITE" id="PS00063">
    <property type="entry name" value="ALDOKETO_REDUCTASE_3"/>
    <property type="match status" value="1"/>
</dbReference>
<name>AK1D1_MOUSE</name>
<feature type="chain" id="PRO_0000124670" description="Aldo-keto reductase family 1 member D1">
    <location>
        <begin position="1"/>
        <end position="325"/>
    </location>
</feature>
<feature type="active site" description="Proton donor" evidence="1">
    <location>
        <position position="57"/>
    </location>
</feature>
<feature type="binding site" evidence="1">
    <location>
        <begin position="22"/>
        <end position="26"/>
    </location>
    <ligand>
        <name>NADP(+)</name>
        <dbReference type="ChEBI" id="CHEBI:58349"/>
    </ligand>
</feature>
<feature type="binding site" evidence="1">
    <location>
        <position position="26"/>
    </location>
    <ligand>
        <name>substrate</name>
    </ligand>
</feature>
<feature type="binding site" evidence="1">
    <location>
        <position position="52"/>
    </location>
    <ligand>
        <name>NADP(+)</name>
        <dbReference type="ChEBI" id="CHEBI:58349"/>
    </ligand>
</feature>
<feature type="binding site" evidence="1">
    <location>
        <position position="57"/>
    </location>
    <ligand>
        <name>substrate</name>
    </ligand>
</feature>
<feature type="binding site" evidence="1">
    <location>
        <position position="88"/>
    </location>
    <ligand>
        <name>substrate</name>
    </ligand>
</feature>
<feature type="binding site" evidence="1">
    <location>
        <position position="119"/>
    </location>
    <ligand>
        <name>substrate</name>
    </ligand>
</feature>
<feature type="binding site" evidence="1">
    <location>
        <position position="131"/>
    </location>
    <ligand>
        <name>substrate</name>
    </ligand>
</feature>
<feature type="binding site" evidence="1">
    <location>
        <begin position="168"/>
        <end position="169"/>
    </location>
    <ligand>
        <name>NADP(+)</name>
        <dbReference type="ChEBI" id="CHEBI:58349"/>
    </ligand>
</feature>
<feature type="binding site" evidence="1">
    <location>
        <position position="192"/>
    </location>
    <ligand>
        <name>NADP(+)</name>
        <dbReference type="ChEBI" id="CHEBI:58349"/>
    </ligand>
</feature>
<feature type="binding site" evidence="1">
    <location>
        <begin position="218"/>
        <end position="223"/>
    </location>
    <ligand>
        <name>NADP(+)</name>
        <dbReference type="ChEBI" id="CHEBI:58349"/>
    </ligand>
</feature>
<feature type="binding site" evidence="1">
    <location>
        <position position="229"/>
    </location>
    <ligand>
        <name>substrate</name>
    </ligand>
</feature>
<feature type="binding site" evidence="1">
    <location>
        <begin position="272"/>
        <end position="282"/>
    </location>
    <ligand>
        <name>NADP(+)</name>
        <dbReference type="ChEBI" id="CHEBI:58349"/>
    </ligand>
</feature>
<feature type="modified residue" description="Phosphoserine" evidence="3">
    <location>
        <position position="228"/>
    </location>
</feature>
<keyword id="KW-0088">Bile acid catabolism</keyword>
<keyword id="KW-0963">Cytoplasm</keyword>
<keyword id="KW-0442">Lipid degradation</keyword>
<keyword id="KW-0443">Lipid metabolism</keyword>
<keyword id="KW-0521">NADP</keyword>
<keyword id="KW-0560">Oxidoreductase</keyword>
<keyword id="KW-0597">Phosphoprotein</keyword>
<keyword id="KW-1185">Reference proteome</keyword>
<keyword id="KW-0753">Steroid metabolism</keyword>